<proteinExistence type="evidence at protein level"/>
<keyword id="KW-0053">Apoptosis</keyword>
<keyword id="KW-0106">Calcium</keyword>
<keyword id="KW-1003">Cell membrane</keyword>
<keyword id="KW-0903">Direct protein sequencing</keyword>
<keyword id="KW-1015">Disulfide bond</keyword>
<keyword id="KW-0325">Glycoprotein</keyword>
<keyword id="KW-0333">Golgi apparatus</keyword>
<keyword id="KW-0378">Hydrolase</keyword>
<keyword id="KW-0443">Lipid metabolism</keyword>
<keyword id="KW-0472">Membrane</keyword>
<keyword id="KW-0479">Metal-binding</keyword>
<keyword id="KW-0496">Mitochondrion</keyword>
<keyword id="KW-0597">Phosphoprotein</keyword>
<keyword id="KW-1185">Reference proteome</keyword>
<keyword id="KW-0964">Secreted</keyword>
<keyword id="KW-0735">Signal-anchor</keyword>
<keyword id="KW-0746">Sphingolipid metabolism</keyword>
<keyword id="KW-0812">Transmembrane</keyword>
<keyword id="KW-1133">Transmembrane helix</keyword>
<keyword id="KW-0832">Ubl conjugation</keyword>
<keyword id="KW-0862">Zinc</keyword>
<protein>
    <recommendedName>
        <fullName evidence="18">Neutral ceramidase</fullName>
        <shortName>N-CDase</shortName>
        <shortName>NCDase</shortName>
        <ecNumber evidence="6 8">3.5.1.-</ecNumber>
        <ecNumber evidence="6 7 8 14 15">3.5.1.23</ecNumber>
    </recommendedName>
    <alternativeName>
        <fullName>Acylsphingosine deacylase 2</fullName>
    </alternativeName>
    <alternativeName>
        <fullName>N-acylsphingosine amidohydrolase 2</fullName>
    </alternativeName>
    <component>
        <recommendedName>
            <fullName evidence="20">Neutral ceramidase soluble form</fullName>
        </recommendedName>
    </component>
</protein>
<accession>Q91XT9</accession>
<sequence length="761" mass="83488">MAKRTFSSLEAFLIFLLVMMTAITVALLTLLFVTSGTIENHKDSGNHWVSTTQGPTTTQSSPTTQTPTTQTPDLPPSQNFSGYYIGVGRADCTGQVSDINLMGYGKNGQNAQGLLTRLFSRAFILADPDGSNRMAFVSVELCMISQRLRLEVLKRLQSKYGSLYRRDNVILSATHTHSGPAGFFQYTLYILASEGFSNRTFQYIVSGIVKSIDIAHTNLKPGKVLINKGNVANVQINRSPSSYLQNPPSERARYSSDTDKEMVVLKLVDLNGEDLGLISWFAVHPVSMNNSNHLVNSDNMGYAAYLFEQEKNRGYLPGQGPFVAGFASSNLGDVSPNILGPHCVNTGESCDNDKSTCPSGGPSMCMASGPGQDMFESTHIIGRVIYQKAKELHASASQEVTGPVLTAHQWVNMTDVSVQLNATHTVKTCKAALGYSFAAGTIDGVSGLNITQGTTEGNLFWDTLRDQLLGKPSEEIIECQKPKPILIHTGELTKPHPWQPDIVDIQIVTLGSLAIAAIPGEFTTMSGRRLREAVKKEFALYGMKDMTVVIAGLSNVYTHYITTYEEYQAQRYEAASTIYGPHTLSAYIQLFRALAKAIATDTVANMSSGPEPPFFKNLIGSLIPNIADRAPIGKQFGDVLQPAKPEYRVGEVVEVVFVGANPKNSAENQTHQTFLTVEKYEDSVANWQIMHNDASWETRFYWHKGVLGLSNATIHWHIPDTALPGVYRIRYFGHNRKQELLKPAVILAFEGISSPFEIVTT</sequence>
<evidence type="ECO:0000250" key="1"/>
<evidence type="ECO:0000250" key="2">
    <source>
        <dbReference type="UniProtKB" id="Q9JHE3"/>
    </source>
</evidence>
<evidence type="ECO:0000250" key="3">
    <source>
        <dbReference type="UniProtKB" id="Q9NR71"/>
    </source>
</evidence>
<evidence type="ECO:0000255" key="4"/>
<evidence type="ECO:0000256" key="5">
    <source>
        <dbReference type="SAM" id="MobiDB-lite"/>
    </source>
</evidence>
<evidence type="ECO:0000269" key="6">
    <source>
    </source>
</evidence>
<evidence type="ECO:0000269" key="7">
    <source>
    </source>
</evidence>
<evidence type="ECO:0000269" key="8">
    <source>
    </source>
</evidence>
<evidence type="ECO:0000269" key="9">
    <source>
    </source>
</evidence>
<evidence type="ECO:0000269" key="10">
    <source>
    </source>
</evidence>
<evidence type="ECO:0000269" key="11">
    <source>
    </source>
</evidence>
<evidence type="ECO:0000269" key="12">
    <source>
    </source>
</evidence>
<evidence type="ECO:0000269" key="13">
    <source>
    </source>
</evidence>
<evidence type="ECO:0000269" key="14">
    <source>
    </source>
</evidence>
<evidence type="ECO:0000269" key="15">
    <source>
    </source>
</evidence>
<evidence type="ECO:0000269" key="16">
    <source>
    </source>
</evidence>
<evidence type="ECO:0000303" key="17">
    <source>
    </source>
</evidence>
<evidence type="ECO:0000305" key="18"/>
<evidence type="ECO:0000305" key="19">
    <source>
    </source>
</evidence>
<evidence type="ECO:0000305" key="20">
    <source>
    </source>
</evidence>
<dbReference type="EC" id="3.5.1.-" evidence="6 8"/>
<dbReference type="EC" id="3.5.1.23" evidence="6 7 8 14 15"/>
<dbReference type="EMBL" id="AB057433">
    <property type="protein sequence ID" value="BAB62033.1"/>
    <property type="molecule type" value="mRNA"/>
</dbReference>
<dbReference type="RefSeq" id="NP_446098.1">
    <property type="nucleotide sequence ID" value="NM_053646.2"/>
</dbReference>
<dbReference type="RefSeq" id="XP_006231325.1">
    <property type="nucleotide sequence ID" value="XM_006231263.3"/>
</dbReference>
<dbReference type="RefSeq" id="XP_006231330.1">
    <property type="nucleotide sequence ID" value="XM_006231268.3"/>
</dbReference>
<dbReference type="RefSeq" id="XP_006231332.1">
    <property type="nucleotide sequence ID" value="XM_006231270.3"/>
</dbReference>
<dbReference type="RefSeq" id="XP_008758542.1">
    <property type="nucleotide sequence ID" value="XM_008760320.4"/>
</dbReference>
<dbReference type="RefSeq" id="XP_017444135.1">
    <property type="nucleotide sequence ID" value="XM_017588646.1"/>
</dbReference>
<dbReference type="RefSeq" id="XP_017444136.1">
    <property type="nucleotide sequence ID" value="XM_017588647.3"/>
</dbReference>
<dbReference type="RefSeq" id="XP_017444137.1">
    <property type="nucleotide sequence ID" value="XM_017588648.3"/>
</dbReference>
<dbReference type="RefSeq" id="XP_017444138.1">
    <property type="nucleotide sequence ID" value="XM_017588649.1"/>
</dbReference>
<dbReference type="RefSeq" id="XP_017444139.1">
    <property type="nucleotide sequence ID" value="XM_017588650.3"/>
</dbReference>
<dbReference type="RefSeq" id="XP_017444140.1">
    <property type="nucleotide sequence ID" value="XM_017588651.1"/>
</dbReference>
<dbReference type="RefSeq" id="XP_038962801.1">
    <property type="nucleotide sequence ID" value="XM_039106873.2"/>
</dbReference>
<dbReference type="RefSeq" id="XP_038962806.1">
    <property type="nucleotide sequence ID" value="XM_039106878.2"/>
</dbReference>
<dbReference type="RefSeq" id="XP_038962807.1">
    <property type="nucleotide sequence ID" value="XM_039106879.2"/>
</dbReference>
<dbReference type="RefSeq" id="XP_038962839.1">
    <property type="nucleotide sequence ID" value="XM_039106911.2"/>
</dbReference>
<dbReference type="RefSeq" id="XP_038962916.1">
    <property type="nucleotide sequence ID" value="XM_039106988.2"/>
</dbReference>
<dbReference type="RefSeq" id="XP_038962949.1">
    <property type="nucleotide sequence ID" value="XM_039107021.2"/>
</dbReference>
<dbReference type="RefSeq" id="XP_038962978.1">
    <property type="nucleotide sequence ID" value="XM_039107050.2"/>
</dbReference>
<dbReference type="RefSeq" id="XP_038963012.1">
    <property type="nucleotide sequence ID" value="XM_039107084.2"/>
</dbReference>
<dbReference type="RefSeq" id="XP_038963044.1">
    <property type="nucleotide sequence ID" value="XM_039107116.2"/>
</dbReference>
<dbReference type="RefSeq" id="XP_038963081.1">
    <property type="nucleotide sequence ID" value="XM_039107153.2"/>
</dbReference>
<dbReference type="RefSeq" id="XP_063118252.1">
    <property type="nucleotide sequence ID" value="XM_063262182.1"/>
</dbReference>
<dbReference type="RefSeq" id="XP_063118305.1">
    <property type="nucleotide sequence ID" value="XM_063262235.1"/>
</dbReference>
<dbReference type="SMR" id="Q91XT9"/>
<dbReference type="FunCoup" id="Q91XT9">
    <property type="interactions" value="42"/>
</dbReference>
<dbReference type="STRING" id="10116.ENSRNOP00000073116"/>
<dbReference type="SwissLipids" id="SLP:000000682"/>
<dbReference type="GlyCosmos" id="Q91XT9">
    <property type="glycosylation" value="16 sites, No reported glycans"/>
</dbReference>
<dbReference type="GlyGen" id="Q91XT9">
    <property type="glycosylation" value="17 sites, 1 N-linked glycan (1 site)"/>
</dbReference>
<dbReference type="iPTMnet" id="Q91XT9"/>
<dbReference type="PhosphoSitePlus" id="Q91XT9"/>
<dbReference type="PaxDb" id="10116-ENSRNOP00000016688"/>
<dbReference type="Ensembl" id="ENSRNOT00000077135.2">
    <property type="protein sequence ID" value="ENSRNOP00000073116.1"/>
    <property type="gene ID" value="ENSRNOG00000012196.6"/>
</dbReference>
<dbReference type="GeneID" id="114104"/>
<dbReference type="KEGG" id="rno:114104"/>
<dbReference type="UCSC" id="RGD:69410">
    <property type="organism name" value="rat"/>
</dbReference>
<dbReference type="AGR" id="RGD:69410"/>
<dbReference type="CTD" id="56624"/>
<dbReference type="RGD" id="69410">
    <property type="gene designation" value="Asah2"/>
</dbReference>
<dbReference type="eggNOG" id="KOG2232">
    <property type="taxonomic scope" value="Eukaryota"/>
</dbReference>
<dbReference type="GeneTree" id="ENSGT00390000015792"/>
<dbReference type="InParanoid" id="Q91XT9"/>
<dbReference type="OMA" id="GTTVQTC"/>
<dbReference type="OrthoDB" id="191371at2759"/>
<dbReference type="PhylomeDB" id="Q91XT9"/>
<dbReference type="BRENDA" id="3.5.1.23">
    <property type="organism ID" value="5301"/>
</dbReference>
<dbReference type="Reactome" id="R-RNO-9840310">
    <property type="pathway name" value="Glycosphingolipid catabolism"/>
</dbReference>
<dbReference type="SABIO-RK" id="Q91XT9"/>
<dbReference type="UniPathway" id="UPA00222"/>
<dbReference type="PRO" id="PR:Q91XT9"/>
<dbReference type="Proteomes" id="UP000002494">
    <property type="component" value="Chromosome 1"/>
</dbReference>
<dbReference type="Bgee" id="ENSRNOG00000012196">
    <property type="expression patterns" value="Expressed in duodenum and 18 other cell types or tissues"/>
</dbReference>
<dbReference type="GO" id="GO:0005901">
    <property type="term" value="C:caveola"/>
    <property type="evidence" value="ECO:0000250"/>
    <property type="project" value="UniProtKB"/>
</dbReference>
<dbReference type="GO" id="GO:0070062">
    <property type="term" value="C:extracellular exosome"/>
    <property type="evidence" value="ECO:0000250"/>
    <property type="project" value="UniProtKB"/>
</dbReference>
<dbReference type="GO" id="GO:0005576">
    <property type="term" value="C:extracellular region"/>
    <property type="evidence" value="ECO:0000318"/>
    <property type="project" value="GO_Central"/>
</dbReference>
<dbReference type="GO" id="GO:0005615">
    <property type="term" value="C:extracellular space"/>
    <property type="evidence" value="ECO:0000314"/>
    <property type="project" value="UniProtKB"/>
</dbReference>
<dbReference type="GO" id="GO:0005794">
    <property type="term" value="C:Golgi apparatus"/>
    <property type="evidence" value="ECO:0000250"/>
    <property type="project" value="UniProtKB"/>
</dbReference>
<dbReference type="GO" id="GO:0000139">
    <property type="term" value="C:Golgi membrane"/>
    <property type="evidence" value="ECO:0007669"/>
    <property type="project" value="UniProtKB-SubCell"/>
</dbReference>
<dbReference type="GO" id="GO:0016020">
    <property type="term" value="C:membrane"/>
    <property type="evidence" value="ECO:0000266"/>
    <property type="project" value="RGD"/>
</dbReference>
<dbReference type="GO" id="GO:0005739">
    <property type="term" value="C:mitochondrion"/>
    <property type="evidence" value="ECO:0000314"/>
    <property type="project" value="UniProtKB"/>
</dbReference>
<dbReference type="GO" id="GO:0005886">
    <property type="term" value="C:plasma membrane"/>
    <property type="evidence" value="ECO:0000314"/>
    <property type="project" value="UniProtKB"/>
</dbReference>
<dbReference type="GO" id="GO:0005509">
    <property type="term" value="F:calcium ion binding"/>
    <property type="evidence" value="ECO:0000250"/>
    <property type="project" value="UniProtKB"/>
</dbReference>
<dbReference type="GO" id="GO:0017040">
    <property type="term" value="F:N-acylsphingosine amidohydrolase activity"/>
    <property type="evidence" value="ECO:0000314"/>
    <property type="project" value="UniProtKB"/>
</dbReference>
<dbReference type="GO" id="GO:0008270">
    <property type="term" value="F:zinc ion binding"/>
    <property type="evidence" value="ECO:0000250"/>
    <property type="project" value="UniProtKB"/>
</dbReference>
<dbReference type="GO" id="GO:0006915">
    <property type="term" value="P:apoptotic process"/>
    <property type="evidence" value="ECO:0007669"/>
    <property type="project" value="UniProtKB-KW"/>
</dbReference>
<dbReference type="GO" id="GO:0071345">
    <property type="term" value="P:cellular response to cytokine stimulus"/>
    <property type="evidence" value="ECO:0000266"/>
    <property type="project" value="RGD"/>
</dbReference>
<dbReference type="GO" id="GO:0046513">
    <property type="term" value="P:ceramide biosynthetic process"/>
    <property type="evidence" value="ECO:0000314"/>
    <property type="project" value="UniProtKB"/>
</dbReference>
<dbReference type="GO" id="GO:0046514">
    <property type="term" value="P:ceramide catabolic process"/>
    <property type="evidence" value="ECO:0000314"/>
    <property type="project" value="UniProtKB"/>
</dbReference>
<dbReference type="GO" id="GO:0006672">
    <property type="term" value="P:ceramide metabolic process"/>
    <property type="evidence" value="ECO:0000250"/>
    <property type="project" value="UniProtKB"/>
</dbReference>
<dbReference type="GO" id="GO:0044241">
    <property type="term" value="P:lipid digestion"/>
    <property type="evidence" value="ECO:0000250"/>
    <property type="project" value="UniProtKB"/>
</dbReference>
<dbReference type="GO" id="GO:0042759">
    <property type="term" value="P:long-chain fatty acid biosynthetic process"/>
    <property type="evidence" value="ECO:0000318"/>
    <property type="project" value="GO_Central"/>
</dbReference>
<dbReference type="GO" id="GO:2001234">
    <property type="term" value="P:negative regulation of apoptotic signaling pathway"/>
    <property type="evidence" value="ECO:0000250"/>
    <property type="project" value="UniProtKB"/>
</dbReference>
<dbReference type="GO" id="GO:0007346">
    <property type="term" value="P:regulation of mitotic cell cycle"/>
    <property type="evidence" value="ECO:0000250"/>
    <property type="project" value="UniProtKB"/>
</dbReference>
<dbReference type="GO" id="GO:0046512">
    <property type="term" value="P:sphingosine biosynthetic process"/>
    <property type="evidence" value="ECO:0000314"/>
    <property type="project" value="UniProtKB"/>
</dbReference>
<dbReference type="GO" id="GO:0006670">
    <property type="term" value="P:sphingosine metabolic process"/>
    <property type="evidence" value="ECO:0000250"/>
    <property type="project" value="UniProtKB"/>
</dbReference>
<dbReference type="FunFam" id="2.60.40.2300:FF:000001">
    <property type="entry name" value="N-acylsphingosine amidohydrolase 2"/>
    <property type="match status" value="1"/>
</dbReference>
<dbReference type="Gene3D" id="2.60.40.2300">
    <property type="entry name" value="Neutral/alkaline non-lysosomal ceramidase, C-terminal domain"/>
    <property type="match status" value="1"/>
</dbReference>
<dbReference type="InterPro" id="IPR006823">
    <property type="entry name" value="Ceramidase_alk"/>
</dbReference>
<dbReference type="InterPro" id="IPR038445">
    <property type="entry name" value="NCDase_C_sf"/>
</dbReference>
<dbReference type="InterPro" id="IPR031331">
    <property type="entry name" value="NEUT/ALK_ceramidase_C"/>
</dbReference>
<dbReference type="InterPro" id="IPR031329">
    <property type="entry name" value="NEUT/ALK_ceramidase_N"/>
</dbReference>
<dbReference type="PANTHER" id="PTHR12670">
    <property type="entry name" value="CERAMIDASE"/>
    <property type="match status" value="1"/>
</dbReference>
<dbReference type="PANTHER" id="PTHR12670:SF1">
    <property type="entry name" value="NEUTRAL CERAMIDASE"/>
    <property type="match status" value="1"/>
</dbReference>
<dbReference type="Pfam" id="PF04734">
    <property type="entry name" value="Ceramidase_alk"/>
    <property type="match status" value="1"/>
</dbReference>
<dbReference type="Pfam" id="PF17048">
    <property type="entry name" value="Ceramidse_alk_C"/>
    <property type="match status" value="1"/>
</dbReference>
<feature type="chain" id="PRO_0000247103" description="Neutral ceramidase">
    <location>
        <begin position="1"/>
        <end position="761"/>
    </location>
</feature>
<feature type="chain" id="PRO_0000247104" description="Neutral ceramidase soluble form" evidence="13">
    <location>
        <begin position="80"/>
        <end position="761"/>
    </location>
</feature>
<feature type="topological domain" description="Cytoplasmic" evidence="4">
    <location>
        <begin position="1"/>
        <end position="11"/>
    </location>
</feature>
<feature type="transmembrane region" description="Helical; Signal-anchor for type II membrane protein" evidence="4">
    <location>
        <begin position="12"/>
        <end position="32"/>
    </location>
</feature>
<feature type="topological domain" description="Lumenal" evidence="4">
    <location>
        <begin position="33"/>
        <end position="761"/>
    </location>
</feature>
<feature type="region of interest" description="Disordered" evidence="5">
    <location>
        <begin position="43"/>
        <end position="76"/>
    </location>
</feature>
<feature type="region of interest" description="Required for correct folding and localization" evidence="14">
    <location>
        <begin position="751"/>
        <end position="761"/>
    </location>
</feature>
<feature type="compositionally biased region" description="Low complexity" evidence="5">
    <location>
        <begin position="50"/>
        <end position="76"/>
    </location>
</feature>
<feature type="active site" description="Nucleophile" evidence="1">
    <location>
        <position position="335"/>
    </location>
</feature>
<feature type="binding site" evidence="3">
    <location>
        <position position="115"/>
    </location>
    <ligand>
        <name>Ca(2+)</name>
        <dbReference type="ChEBI" id="CHEBI:29108"/>
    </ligand>
</feature>
<feature type="binding site" evidence="3">
    <location>
        <position position="175"/>
    </location>
    <ligand>
        <name>Zn(2+)</name>
        <dbReference type="ChEBI" id="CHEBI:29105"/>
    </ligand>
</feature>
<feature type="binding site" evidence="3">
    <location>
        <position position="284"/>
    </location>
    <ligand>
        <name>Zn(2+)</name>
        <dbReference type="ChEBI" id="CHEBI:29105"/>
    </ligand>
</feature>
<feature type="binding site" evidence="3">
    <location>
        <position position="521"/>
    </location>
    <ligand>
        <name>Zn(2+)</name>
        <dbReference type="ChEBI" id="CHEBI:29105"/>
    </ligand>
</feature>
<feature type="binding site" evidence="3">
    <location>
        <position position="560"/>
    </location>
    <ligand>
        <name>Zn(2+)</name>
        <dbReference type="ChEBI" id="CHEBI:29105"/>
    </ligand>
</feature>
<feature type="binding site" evidence="3">
    <location>
        <position position="693"/>
    </location>
    <ligand>
        <name>Ca(2+)</name>
        <dbReference type="ChEBI" id="CHEBI:29108"/>
    </ligand>
</feature>
<feature type="binding site" evidence="3">
    <location>
        <position position="695"/>
    </location>
    <ligand>
        <name>Ca(2+)</name>
        <dbReference type="ChEBI" id="CHEBI:29108"/>
    </ligand>
</feature>
<feature type="binding site" evidence="3">
    <location>
        <position position="698"/>
    </location>
    <ligand>
        <name>Ca(2+)</name>
        <dbReference type="ChEBI" id="CHEBI:29108"/>
    </ligand>
</feature>
<feature type="site" description="Cleavage" evidence="13">
    <location>
        <begin position="79"/>
        <end position="80"/>
    </location>
</feature>
<feature type="glycosylation site" description="O-linked (GalNAc...) threonine" evidence="4">
    <location>
        <position position="51"/>
    </location>
</feature>
<feature type="glycosylation site" description="O-linked (GalNAc...) threonine" evidence="4">
    <location>
        <position position="52"/>
    </location>
</feature>
<feature type="glycosylation site" description="O-linked (GalNAc...) threonine" evidence="4">
    <location>
        <position position="56"/>
    </location>
</feature>
<feature type="glycosylation site" description="O-linked (GalNAc...) threonine" evidence="4">
    <location>
        <position position="57"/>
    </location>
</feature>
<feature type="glycosylation site" description="O-linked (GalNAc...) threonine" evidence="4">
    <location>
        <position position="58"/>
    </location>
</feature>
<feature type="glycosylation site" description="O-linked (GalNAc...) serine" evidence="4">
    <location>
        <position position="60"/>
    </location>
</feature>
<feature type="glycosylation site" description="O-linked (GalNAc...) serine" evidence="4">
    <location>
        <position position="61"/>
    </location>
</feature>
<feature type="glycosylation site" description="O-linked (GalNAc...) threonine" evidence="4">
    <location>
        <position position="63"/>
    </location>
</feature>
<feature type="glycosylation site" description="O-linked (GalNAc...) threonine" evidence="4">
    <location>
        <position position="64"/>
    </location>
</feature>
<feature type="glycosylation site" description="O-linked (GalNAc...) threonine" evidence="4">
    <location>
        <position position="66"/>
    </location>
</feature>
<feature type="glycosylation site" description="O-linked (GalNAc...) threonine" evidence="4">
    <location>
        <position position="68"/>
    </location>
</feature>
<feature type="glycosylation site" description="O-linked (GalNAc...) threonine" evidence="4">
    <location>
        <position position="69"/>
    </location>
</feature>
<feature type="glycosylation site" description="O-linked (GalNAc...) threonine" evidence="4">
    <location>
        <position position="71"/>
    </location>
</feature>
<feature type="glycosylation site" description="N-linked (GlcNAc...) asparagine" evidence="4">
    <location>
        <position position="198"/>
    </location>
</feature>
<feature type="glycosylation site" description="N-linked (GlcNAc...) asparagine" evidence="4">
    <location>
        <position position="412"/>
    </location>
</feature>
<feature type="glycosylation site" description="N-linked (GlcNAc...) asparagine" evidence="4">
    <location>
        <position position="449"/>
    </location>
</feature>
<feature type="disulfide bond" evidence="3">
    <location>
        <begin position="343"/>
        <end position="357"/>
    </location>
</feature>
<feature type="disulfide bond" evidence="3">
    <location>
        <begin position="350"/>
        <end position="365"/>
    </location>
</feature>
<feature type="disulfide bond" evidence="3">
    <location>
        <begin position="429"/>
        <end position="479"/>
    </location>
</feature>
<feature type="mutagenesis site" description="Abolishes O-glycosylation and localization at the cell surface; when associated with A-50; A-51; A-52; A-56; A-57; A-58; A-60; A-61; A-62; A-63; A-65; A-76; A-68; A-69; A-71 and A-77." evidence="13">
    <original>S</original>
    <variation>A</variation>
    <location>
        <position position="44"/>
    </location>
</feature>
<feature type="mutagenesis site" description="Abolishes O-glycosylation and localization at the cell surface; when associated with A-44 and A-77." evidence="13">
    <original>STTQGPTTTQSSPTTQTPTTQT</original>
    <variation>AAAQGPAAAQAAPAAQAPAAQA</variation>
    <location>
        <begin position="50"/>
        <end position="71"/>
    </location>
</feature>
<feature type="mutagenesis site" description="Abolishes O-glycosylation and localization at the cell surface; when associated with A-44; A-50; A-51; A-52; A-56; A-57; A-58; A-60; A-61; A-62; A-63; A-65; A-76; A-68; A-69 and A-71." evidence="13">
    <original>S</original>
    <variation>A</variation>
    <location>
        <position position="77"/>
    </location>
</feature>
<feature type="mutagenesis site" description="No effect." evidence="14">
    <original>F</original>
    <variation>I</variation>
    <location>
        <position position="756"/>
    </location>
</feature>
<feature type="mutagenesis site" description="Loss of function." evidence="14">
    <original>F</original>
    <variation>R</variation>
    <variation>D</variation>
    <location>
        <position position="756"/>
    </location>
</feature>
<feature type="mutagenesis site" description="No effect." evidence="14">
    <original>E</original>
    <variation>R</variation>
    <location>
        <position position="757"/>
    </location>
</feature>
<feature type="mutagenesis site" description="Impairs enzyme activity." evidence="14">
    <original>I</original>
    <variation>F</variation>
    <location>
        <position position="758"/>
    </location>
</feature>
<feature type="mutagenesis site" description="Loss of function." evidence="14">
    <original>I</original>
    <variation>R</variation>
    <variation>D</variation>
    <location>
        <position position="758"/>
    </location>
</feature>
<feature type="mutagenesis site" description="No effect." evidence="14">
    <original>I</original>
    <variation>V</variation>
    <location>
        <position position="758"/>
    </location>
</feature>
<feature type="sequence conflict" description="In Ref. 3; AA sequence." evidence="18" ref="3">
    <original>G</original>
    <variation>N</variation>
    <location>
        <position position="325"/>
    </location>
</feature>
<comment type="function">
    <text evidence="2 6 7 8 14 15 17">Plasma membrane ceramidase that hydrolyzes sphingolipid ceramides into sphingosine and free fatty acids at neutral pH (PubMed:10488143, PubMed:11328816, PubMed:15217782). Ceramides, sphingosine, and its phosphorylated form sphingosine-1-phosphate are bioactive lipids that mediate cellular signaling pathways regulating several biological processes including cell proliferation, apoptosis and differentiation (PubMed:11328816). Also catalyzes the reverse reaction allowing the synthesis of ceramides from fatty acids and sphingosine (PubMed:11278489, PubMed:15123644). Together with sphingomyelinase, participates in the production of sphingosine and sphingosine-1-phosphate from the degradation of sphingomyelin, a sphingolipid enriched in the plasma membrane of cells (PubMed:15217782). Also participates in the hydrolysis of ceramides from the extracellular milieu allowing the production of sphingosine-1-phosphate inside and outside cells. This is the case for instance with the digestion of dietary sphingolipids in the intestinal tract (By similarity).</text>
</comment>
<comment type="catalytic activity">
    <reaction evidence="6 7 8 14 15">
        <text>an N-acylsphing-4-enine + H2O = sphing-4-enine + a fatty acid</text>
        <dbReference type="Rhea" id="RHEA:20856"/>
        <dbReference type="ChEBI" id="CHEBI:15377"/>
        <dbReference type="ChEBI" id="CHEBI:28868"/>
        <dbReference type="ChEBI" id="CHEBI:52639"/>
        <dbReference type="ChEBI" id="CHEBI:57756"/>
        <dbReference type="EC" id="3.5.1.23"/>
    </reaction>
    <physiologicalReaction direction="left-to-right" evidence="2">
        <dbReference type="Rhea" id="RHEA:20857"/>
    </physiologicalReaction>
</comment>
<comment type="catalytic activity">
    <reaction evidence="6 7 8 15">
        <text>N-hexadecanoylsphing-4-enine + H2O = sphing-4-enine + hexadecanoate</text>
        <dbReference type="Rhea" id="RHEA:38891"/>
        <dbReference type="ChEBI" id="CHEBI:7896"/>
        <dbReference type="ChEBI" id="CHEBI:15377"/>
        <dbReference type="ChEBI" id="CHEBI:57756"/>
        <dbReference type="ChEBI" id="CHEBI:72959"/>
    </reaction>
    <physiologicalReaction direction="left-to-right" evidence="2">
        <dbReference type="Rhea" id="RHEA:38892"/>
    </physiologicalReaction>
    <physiologicalReaction direction="right-to-left" evidence="19">
        <dbReference type="Rhea" id="RHEA:38893"/>
    </physiologicalReaction>
</comment>
<comment type="catalytic activity">
    <reaction evidence="7">
        <text>N-tetradecanoylsphing-4-enine + H2O = tetradecanoate + sphing-4-enine</text>
        <dbReference type="Rhea" id="RHEA:41287"/>
        <dbReference type="ChEBI" id="CHEBI:15377"/>
        <dbReference type="ChEBI" id="CHEBI:30807"/>
        <dbReference type="ChEBI" id="CHEBI:57756"/>
        <dbReference type="ChEBI" id="CHEBI:72957"/>
    </reaction>
    <physiologicalReaction direction="right-to-left" evidence="19">
        <dbReference type="Rhea" id="RHEA:41289"/>
    </physiologicalReaction>
</comment>
<comment type="catalytic activity">
    <reaction evidence="7">
        <text>N-(9Z-octadecenoyl)-sphing-4-enine + H2O = sphing-4-enine + (9Z)-octadecenoate</text>
        <dbReference type="Rhea" id="RHEA:41299"/>
        <dbReference type="ChEBI" id="CHEBI:15377"/>
        <dbReference type="ChEBI" id="CHEBI:30823"/>
        <dbReference type="ChEBI" id="CHEBI:57756"/>
        <dbReference type="ChEBI" id="CHEBI:77996"/>
    </reaction>
    <physiologicalReaction direction="left-to-right" evidence="3">
        <dbReference type="Rhea" id="RHEA:41300"/>
    </physiologicalReaction>
    <physiologicalReaction direction="right-to-left" evidence="19">
        <dbReference type="Rhea" id="RHEA:41301"/>
    </physiologicalReaction>
</comment>
<comment type="catalytic activity">
    <reaction evidence="7">
        <text>N-(15Z-tetracosenoyl)-sphing-4-enine + H2O = (15Z)-tetracosenoate + sphing-4-enine</text>
        <dbReference type="Rhea" id="RHEA:41267"/>
        <dbReference type="ChEBI" id="CHEBI:15377"/>
        <dbReference type="ChEBI" id="CHEBI:32392"/>
        <dbReference type="ChEBI" id="CHEBI:57756"/>
        <dbReference type="ChEBI" id="CHEBI:74450"/>
    </reaction>
    <physiologicalReaction direction="right-to-left" evidence="19">
        <dbReference type="Rhea" id="RHEA:41269"/>
    </physiologicalReaction>
</comment>
<comment type="catalytic activity">
    <reaction evidence="8 15">
        <text>N-octanoylsphing-4-enine + H2O = octanoate + sphing-4-enine</text>
        <dbReference type="Rhea" id="RHEA:45092"/>
        <dbReference type="ChEBI" id="CHEBI:15377"/>
        <dbReference type="ChEBI" id="CHEBI:25646"/>
        <dbReference type="ChEBI" id="CHEBI:45815"/>
        <dbReference type="ChEBI" id="CHEBI:57756"/>
    </reaction>
    <physiologicalReaction direction="left-to-right" evidence="3">
        <dbReference type="Rhea" id="RHEA:45093"/>
    </physiologicalReaction>
</comment>
<comment type="catalytic activity">
    <reaction evidence="8 14">
        <text>N-dodecanoylsphing-4-enine + H2O = dodecanoate + sphing-4-enine</text>
        <dbReference type="Rhea" id="RHEA:41291"/>
        <dbReference type="ChEBI" id="CHEBI:15377"/>
        <dbReference type="ChEBI" id="CHEBI:18262"/>
        <dbReference type="ChEBI" id="CHEBI:57756"/>
        <dbReference type="ChEBI" id="CHEBI:72956"/>
    </reaction>
    <physiologicalReaction direction="left-to-right" evidence="2">
        <dbReference type="Rhea" id="RHEA:41292"/>
    </physiologicalReaction>
    <physiologicalReaction direction="right-to-left" evidence="2">
        <dbReference type="Rhea" id="RHEA:41293"/>
    </physiologicalReaction>
</comment>
<comment type="catalytic activity">
    <reaction evidence="3">
        <text>N-(hexanoyl)sphing-4-enine + H2O = hexanoate + sphing-4-enine</text>
        <dbReference type="Rhea" id="RHEA:41295"/>
        <dbReference type="ChEBI" id="CHEBI:15377"/>
        <dbReference type="ChEBI" id="CHEBI:17120"/>
        <dbReference type="ChEBI" id="CHEBI:57756"/>
        <dbReference type="ChEBI" id="CHEBI:63867"/>
    </reaction>
    <physiologicalReaction direction="left-to-right" evidence="3">
        <dbReference type="Rhea" id="RHEA:41296"/>
    </physiologicalReaction>
</comment>
<comment type="catalytic activity">
    <reaction evidence="2">
        <text>N-octadecanoylsphing-4-enine + H2O = sphing-4-enine + octadecanoate</text>
        <dbReference type="Rhea" id="RHEA:41279"/>
        <dbReference type="ChEBI" id="CHEBI:15377"/>
        <dbReference type="ChEBI" id="CHEBI:25629"/>
        <dbReference type="ChEBI" id="CHEBI:57756"/>
        <dbReference type="ChEBI" id="CHEBI:72961"/>
    </reaction>
    <physiologicalReaction direction="left-to-right" evidence="2">
        <dbReference type="Rhea" id="RHEA:41280"/>
    </physiologicalReaction>
</comment>
<comment type="catalytic activity">
    <reaction evidence="6 8">
        <text>sphinganine + hexadecanoate = N-hexadecanoylsphinganine + H2O</text>
        <dbReference type="Rhea" id="RHEA:43440"/>
        <dbReference type="ChEBI" id="CHEBI:7896"/>
        <dbReference type="ChEBI" id="CHEBI:15377"/>
        <dbReference type="ChEBI" id="CHEBI:57817"/>
        <dbReference type="ChEBI" id="CHEBI:67042"/>
    </reaction>
    <physiologicalReaction direction="right-to-left" evidence="2">
        <dbReference type="Rhea" id="RHEA:43442"/>
    </physiologicalReaction>
</comment>
<comment type="catalytic activity">
    <reaction evidence="8">
        <text>N-(octadecanoyl)-sphinganine + H2O = sphinganine + octadecanoate</text>
        <dbReference type="Rhea" id="RHEA:45008"/>
        <dbReference type="ChEBI" id="CHEBI:15377"/>
        <dbReference type="ChEBI" id="CHEBI:25629"/>
        <dbReference type="ChEBI" id="CHEBI:57817"/>
        <dbReference type="ChEBI" id="CHEBI:67033"/>
    </reaction>
    <physiologicalReaction direction="left-to-right" evidence="2">
        <dbReference type="Rhea" id="RHEA:45009"/>
    </physiologicalReaction>
</comment>
<comment type="cofactor">
    <cofactor evidence="3">
        <name>Zn(2+)</name>
        <dbReference type="ChEBI" id="CHEBI:29105"/>
    </cofactor>
    <text evidence="3">Binds 1 zinc ion per subunit.</text>
</comment>
<comment type="activity regulation">
    <text evidence="7">The reverse reaction is inhibited by Zn(2+) and Cu(2+) (PubMed:11278489). Inhibited by cardiolipin and phosphatidic acid (PubMed:11278489).</text>
</comment>
<comment type="biophysicochemical properties">
    <kinetics>
        <KM evidence="15">71.4 uM for N-(octanoyl)-sphing-4-enine</KM>
        <KM evidence="15">66 uM for N-hexadecanoylsphing-4-enine</KM>
        <Vmax evidence="15">160.0 umol/min/mg enzyme with N-(octanoyl)-sphing-4-enine as substrate</Vmax>
        <Vmax evidence="15">16.0 umol/min/mg enzyme with N-hexadecanoylsphing-4-enine as substrate</Vmax>
        <Vmax evidence="6">4.4 umol/min/mg enzyme with N-hexadecanoylsphing-4-enine as substrate</Vmax>
        <Vmax evidence="6">1.2 umol/min/mg enzyme with dihydroceramide as substrate</Vmax>
        <Vmax evidence="7">0.63 umol/min/mg enzyme toward tetradecanoate for the synthesis of N-tetradecanoylsphing-4-enine (at pH 7.0)</Vmax>
        <Vmax evidence="7">0.47 umol/min/mg enzyme toward hexadecanoate for the synthesis of N-hexadecanoylsphing-4-enine (at pH 7.0)</Vmax>
        <Vmax evidence="7">0.28 umol/min/mg enzyme toward (9Z)-octadecenoate for the synthesis of N-(9Z-octadecenoyl)-sphing-4-enine (at pH 7.0)</Vmax>
        <Vmax evidence="7">0.25 umol/min/mg enzyme toward (15Z)-tetracosenoate for the synthesis of N-(15Z-tetracosenoyl)sphing-4-enine (at pH 7.0)</Vmax>
        <Vmax evidence="7">0.3 umol/min/mg enzyme toward D-erythro-sphing-4-enine for the synthesis of N-hexadecanoylsphing-4-enine (at pH 7.0)</Vmax>
        <text evidence="6 7 8">More efficiently hydrolyzes N-lauroylsphingosine/C12:0-ceramides compared to N-palmitoylsphingosine/C16:0-ceramides and N-stearoylsphingosine/C18:0-ceramides (PubMed:11328816). The catalytic efficiency towards dihydroceramides and phytoceramides is very low (PubMed:10488143, PubMed:11328816). For the reverse synthetic reaction exhibits a higher activity with D-erythro-sphing-4-enine and the fatty acid tetradecanoate as substrates (PubMed:11278489).</text>
    </kinetics>
    <phDependence>
        <text evidence="6 7 8 15">Optimum pH is 6-7 for N-hexadecanoylsphing-4-enine hydrolysis (PubMed:11328816). Optimum pH is 7-10 for N-hexadecanoylsphing-4-enine hydrolysis (PubMed:10488143). Optimum pH is 6-8 for N-(octanoyl)-sphing-4-enine hydrolysis (PubMed:15217782). Optimum pH is 6.5-7 for hexadecanoate in the reverse reaction (PubMed:11278489).</text>
    </phDependence>
</comment>
<comment type="pathway">
    <text evidence="15">Lipid metabolism; sphingolipid metabolism.</text>
</comment>
<comment type="subcellular location">
    <molecule>Neutral ceramidase</molecule>
    <subcellularLocation>
        <location evidence="8 13 14">Cell membrane</location>
        <topology evidence="13">Single-pass type II membrane protein</topology>
    </subcellularLocation>
    <subcellularLocation>
        <location evidence="8">Membrane raft</location>
        <topology evidence="13">Single-pass type II membrane protein</topology>
    </subcellularLocation>
    <subcellularLocation>
        <location evidence="2">Membrane</location>
        <location evidence="2">Caveola</location>
        <topology evidence="13">Single-pass type II membrane protein</topology>
    </subcellularLocation>
    <subcellularLocation>
        <location evidence="3">Golgi apparatus membrane</location>
        <topology evidence="13">Single-pass type II membrane protein</topology>
    </subcellularLocation>
    <subcellularLocation>
        <location evidence="16">Mitochondrion</location>
    </subcellularLocation>
    <subcellularLocation>
        <location evidence="3">Secreted</location>
        <location evidence="3">Extracellular exosome</location>
    </subcellularLocation>
    <text evidence="2 3">Enriched in exosomes upon stimulation by cytokine (By similarity). Enriched in caveolae and lipid rafts (By similarity). The localization to the mitochondrion could not be confirmed (By similarity).</text>
</comment>
<comment type="subcellular location">
    <molecule>Neutral ceramidase soluble form</molecule>
    <subcellularLocation>
        <location evidence="13 14">Secreted</location>
    </subcellularLocation>
</comment>
<comment type="tissue specificity">
    <text evidence="8 9">Highly expressed in brain, kidney and heart (PubMed:11328816). Expressed at lower level in other tissues such as liver (PubMed:11328816). Expressed in intestine, kidney and liver (at protein level) (PubMed:11328816, PubMed:11330410). Localizes in the epithelia of the jejunum and ileum (PubMed:11330410).</text>
</comment>
<comment type="induction">
    <text evidence="10">By interleukin-1-beta in renal mesangial cells.</text>
</comment>
<comment type="PTM">
    <text evidence="13">Proteolytic cleavage of the N-terminus removes the signal-anchor and produces a soluble form of the protein.</text>
</comment>
<comment type="PTM">
    <text evidence="8 14">N-glycosylated (PubMed:11328816, PubMed:15123644). Required for enzyme activity (PubMed:11328816).</text>
</comment>
<comment type="PTM">
    <text evidence="13">O-glycosylated (PubMed:12499379). Required to retain it as a type II membrane protein at the cell surface (PubMed:12499379).</text>
</comment>
<comment type="PTM">
    <text evidence="11 12">Phosphorylated. May prevent ubiquitination and subsequent degradation.</text>
</comment>
<comment type="PTM">
    <text evidence="12">Ubiquitinated, leading to its degradation by the proteasome. Ubiquitination is triggered by nitric oxide.</text>
</comment>
<comment type="similarity">
    <text evidence="18">Belongs to the neutral ceramidase family.</text>
</comment>
<reference key="1">
    <citation type="journal article" date="2001" name="J. Biol. Chem.">
        <title>Purification, characterization, molecular cloning, and subcellular distribution of neutral ceramidase of rat kidney.</title>
        <authorList>
            <person name="Mitsutake S."/>
            <person name="Tani M."/>
            <person name="Okino N."/>
            <person name="Mori K."/>
            <person name="Ichinose S."/>
            <person name="Omori A."/>
            <person name="Iida H."/>
            <person name="Nakamura T."/>
            <person name="Ito M."/>
        </authorList>
    </citation>
    <scope>NUCLEOTIDE SEQUENCE [MRNA]</scope>
    <scope>PROTEIN SEQUENCE OF 223-245; 261-273; 601-619 AND 701-729</scope>
    <scope>FUNCTION</scope>
    <scope>CATALYTIC ACTIVITY</scope>
    <scope>BIOPHYSICOCHEMICAL PROPERTIES</scope>
    <scope>GLYCOSYLATION</scope>
    <scope>SUBCELLULAR LOCATION</scope>
    <scope>TISSUE SPECIFICITY</scope>
    <source>
        <tissue>Kidney</tissue>
    </source>
</reference>
<reference key="2">
    <citation type="journal article" date="2003" name="J. Biol. Chem.">
        <title>O-glycosylation of mucin-like domain retains the neutral ceramidase on the plasma membranes as a type II integral membrane protein.</title>
        <authorList>
            <person name="Tani M."/>
            <person name="Iida H."/>
            <person name="Ito M."/>
        </authorList>
    </citation>
    <scope>PROTEIN SEQUENCE OF 80-100</scope>
    <scope>SUBCELLULAR LOCATION</scope>
    <scope>TOPOLOGY</scope>
    <scope>GLYCOSYLATION</scope>
    <scope>MUTAGENESIS OF SER-44; 50-SER--THR-71 AND SER-77</scope>
    <scope>PROTEOLYTIC CLEAVAGE AFTER ASN-79</scope>
</reference>
<reference key="3">
    <citation type="journal article" date="2000" name="J. Biol. Chem.">
        <title>Molecular cloning and characterization of a human mitochondrial ceramidase.</title>
        <authorList>
            <person name="El Bawab S."/>
            <person name="Roddy P."/>
            <person name="Qian T."/>
            <person name="Bielawska A."/>
            <person name="Lemasters J.J."/>
            <person name="Hannun Y.A."/>
        </authorList>
    </citation>
    <scope>PROTEIN SEQUENCE OF 311-327; 635-648 AND 737-753</scope>
</reference>
<reference key="4">
    <citation type="journal article" date="1999" name="J. Biol. Chem.">
        <title>Purification and characterization of a membrane-bound nonlysosomal ceramidase from rat brain.</title>
        <authorList>
            <person name="El Bawab S."/>
            <person name="Bielawska A."/>
            <person name="Hannun Y.A."/>
        </authorList>
    </citation>
    <scope>FUNCTION</scope>
    <scope>CATALYTIC ACTIVITY</scope>
    <scope>BIOPHYSICOCHEMICAL PROPERTIES</scope>
</reference>
<reference key="5">
    <citation type="journal article" date="2001" name="Dig. Dis. Sci.">
        <title>Distribution and properties of neutral ceramidase activity in rat intestinal tract.</title>
        <authorList>
            <person name="Lundgren P."/>
            <person name="Nilsson A."/>
            <person name="Duan R.D."/>
        </authorList>
    </citation>
    <scope>TISSUE SPECIFICITY</scope>
</reference>
<reference key="6">
    <citation type="journal article" date="2001" name="J. Biol. Chem.">
        <title>Biochemical characterization of the reverse activity of rat brain ceramidase. A CoA-independent and fumonisin B1-insensitive ceramide synthase.</title>
        <authorList>
            <person name="El Bawab S."/>
            <person name="Birbes H."/>
            <person name="Roddy P."/>
            <person name="Szulc Z.M."/>
            <person name="Bielawska A."/>
            <person name="Hannun Y.A."/>
        </authorList>
    </citation>
    <scope>FUNCTION</scope>
    <scope>CATALYTIC ACTIVITY</scope>
    <scope>BIOPHYSICOCHEMICAL PROPERTIES</scope>
    <scope>ACTIVITY REGULATION</scope>
</reference>
<reference key="7">
    <citation type="journal article" date="2001" name="J. Biol. Chem.">
        <title>Interleukin-1beta induces chronic activation and de novo synthesis of neutral ceramidase in renal mesangial cells.</title>
        <authorList>
            <person name="Franzen R."/>
            <person name="Pautz A."/>
            <person name="Braeutigam L."/>
            <person name="Geisslinger G."/>
            <person name="Pfeilschifter J."/>
            <person name="Huwiler A."/>
        </authorList>
    </citation>
    <scope>INDUCTION</scope>
</reference>
<reference key="8">
    <citation type="journal article" date="2002" name="J. Biol. Chem.">
        <title>Nitric oxide induces degradation of the neutral ceramidase in rat renal mesangial cells and is counterregulated by protein kinase C.</title>
        <authorList>
            <person name="Franzen R."/>
            <person name="Fabbro D."/>
            <person name="Aschrafi A."/>
            <person name="Pfeilschifter J."/>
            <person name="Huwiler A."/>
        </authorList>
    </citation>
    <scope>PHOSPHORYLATION</scope>
</reference>
<reference key="9">
    <citation type="journal article" date="2002" name="FEBS Lett.">
        <title>Nitric oxide induces neutral ceramidase degradation by the ubiquitin/proteasome complex in renal mesangial cell cultures.</title>
        <authorList>
            <person name="Franzen R."/>
            <person name="Pfeilschifter J."/>
            <person name="Huwiler A."/>
        </authorList>
    </citation>
    <scope>UBIQUITINATION</scope>
</reference>
<reference key="10">
    <citation type="journal article" date="2004" name="J. Biol. Chem.">
        <title>Conserved amino acid residues in the COOH-terminal tail are indispensable for the correct folding and localization and enzyme activity of neutral ceramidase.</title>
        <authorList>
            <person name="Tani M."/>
            <person name="Okino N."/>
            <person name="Sueyoshi N."/>
            <person name="Ito M."/>
        </authorList>
    </citation>
    <scope>FUNCTION</scope>
    <scope>CATALYTIC ACTIVITY</scope>
    <scope>SUBCELLULAR LOCATION</scope>
    <scope>GLYCOSYLATION</scope>
    <scope>MUTAGENESIS OF PHE-756; GLU-757 AND ILE-758</scope>
    <scope>REGION</scope>
</reference>
<reference key="11">
    <citation type="journal article" date="2004" name="Am. J. Physiol.">
        <title>Rat intestinal ceramidase: purification, properties, and physiological relevance.</title>
        <authorList>
            <person name="Olsson M."/>
            <person name="Duan R.-D."/>
            <person name="Ohlsson L."/>
            <person name="Nilsson A."/>
        </authorList>
    </citation>
    <scope>IDENTIFICATION BY MASS SPECTROMETRY</scope>
    <scope>FUNCTION</scope>
    <scope>CATALYTIC ACTIVITY</scope>
    <scope>PATHWAY</scope>
    <scope>BIOPHYSICOCHEMICAL PROPERTIES</scope>
</reference>
<reference key="12">
    <citation type="journal article" date="2011" name="J. Biol. Chem.">
        <title>Novel pathway of ceramide production in mitochondria: thioesterase and neutral ceramidase produce ceramide from sphingosine and acyl-CoA.</title>
        <authorList>
            <person name="Novgorodov S.A."/>
            <person name="Wu B.X."/>
            <person name="Gudz T.I."/>
            <person name="Bielawski J."/>
            <person name="Ovchinnikova T.V."/>
            <person name="Hannun Y.A."/>
            <person name="Obeid L.M."/>
        </authorList>
    </citation>
    <scope>SUBCELLULAR LOCATION</scope>
</reference>
<gene>
    <name type="primary">Asah2</name>
</gene>
<organism>
    <name type="scientific">Rattus norvegicus</name>
    <name type="common">Rat</name>
    <dbReference type="NCBI Taxonomy" id="10116"/>
    <lineage>
        <taxon>Eukaryota</taxon>
        <taxon>Metazoa</taxon>
        <taxon>Chordata</taxon>
        <taxon>Craniata</taxon>
        <taxon>Vertebrata</taxon>
        <taxon>Euteleostomi</taxon>
        <taxon>Mammalia</taxon>
        <taxon>Eutheria</taxon>
        <taxon>Euarchontoglires</taxon>
        <taxon>Glires</taxon>
        <taxon>Rodentia</taxon>
        <taxon>Myomorpha</taxon>
        <taxon>Muroidea</taxon>
        <taxon>Muridae</taxon>
        <taxon>Murinae</taxon>
        <taxon>Rattus</taxon>
    </lineage>
</organism>
<name>ASAH2_RAT</name>